<protein>
    <recommendedName>
        <fullName>Phenylalanine ammonia-lyase</fullName>
        <ecNumber evidence="2">4.3.1.24</ecNumber>
    </recommendedName>
</protein>
<dbReference type="EC" id="4.3.1.24" evidence="2"/>
<dbReference type="EMBL" id="D26596">
    <property type="protein sequence ID" value="BAA05643.1"/>
    <property type="molecule type" value="mRNA"/>
</dbReference>
<dbReference type="SMR" id="P45726"/>
<dbReference type="UniPathway" id="UPA00713">
    <property type="reaction ID" value="UER00725"/>
</dbReference>
<dbReference type="GO" id="GO:0005737">
    <property type="term" value="C:cytoplasm"/>
    <property type="evidence" value="ECO:0007669"/>
    <property type="project" value="UniProtKB-SubCell"/>
</dbReference>
<dbReference type="GO" id="GO:0045548">
    <property type="term" value="F:phenylalanine ammonia-lyase activity"/>
    <property type="evidence" value="ECO:0007669"/>
    <property type="project" value="UniProtKB-EC"/>
</dbReference>
<dbReference type="GO" id="GO:0009800">
    <property type="term" value="P:cinnamic acid biosynthetic process"/>
    <property type="evidence" value="ECO:0007669"/>
    <property type="project" value="UniProtKB-UniPathway"/>
</dbReference>
<dbReference type="GO" id="GO:0006559">
    <property type="term" value="P:L-phenylalanine catabolic process"/>
    <property type="evidence" value="ECO:0007669"/>
    <property type="project" value="UniProtKB-KW"/>
</dbReference>
<dbReference type="CDD" id="cd00332">
    <property type="entry name" value="PAL-HAL"/>
    <property type="match status" value="1"/>
</dbReference>
<dbReference type="FunFam" id="1.10.274.20:FF:000001">
    <property type="entry name" value="Phenylalanine ammonia-lyase"/>
    <property type="match status" value="1"/>
</dbReference>
<dbReference type="FunFam" id="1.10.275.10:FF:000009">
    <property type="entry name" value="Phenylalanine ammonia-lyase"/>
    <property type="match status" value="1"/>
</dbReference>
<dbReference type="FunFam" id="1.20.200.10:FF:000009">
    <property type="entry name" value="Phenylalanine ammonia-lyase"/>
    <property type="match status" value="1"/>
</dbReference>
<dbReference type="Gene3D" id="1.20.200.10">
    <property type="entry name" value="Fumarase/aspartase (Central domain)"/>
    <property type="match status" value="1"/>
</dbReference>
<dbReference type="Gene3D" id="1.10.275.10">
    <property type="entry name" value="Fumarase/aspartase (N-terminal domain)"/>
    <property type="match status" value="1"/>
</dbReference>
<dbReference type="Gene3D" id="1.10.274.20">
    <property type="entry name" value="Phenylalanine ammonia-lyase 1, domain 3"/>
    <property type="match status" value="1"/>
</dbReference>
<dbReference type="InterPro" id="IPR001106">
    <property type="entry name" value="Aromatic_Lyase"/>
</dbReference>
<dbReference type="InterPro" id="IPR024083">
    <property type="entry name" value="Fumarase/histidase_N"/>
</dbReference>
<dbReference type="InterPro" id="IPR008948">
    <property type="entry name" value="L-Aspartase-like"/>
</dbReference>
<dbReference type="InterPro" id="IPR022313">
    <property type="entry name" value="Phe/His_NH3-lyase_AS"/>
</dbReference>
<dbReference type="InterPro" id="IPR005922">
    <property type="entry name" value="Phe_NH3-lyase"/>
</dbReference>
<dbReference type="InterPro" id="IPR023144">
    <property type="entry name" value="Phe_NH3-lyase_shielding_dom_sf"/>
</dbReference>
<dbReference type="NCBIfam" id="TIGR01226">
    <property type="entry name" value="phe_am_lyase"/>
    <property type="match status" value="1"/>
</dbReference>
<dbReference type="PANTHER" id="PTHR10362">
    <property type="entry name" value="HISTIDINE AMMONIA-LYASE"/>
    <property type="match status" value="1"/>
</dbReference>
<dbReference type="Pfam" id="PF00221">
    <property type="entry name" value="Lyase_aromatic"/>
    <property type="match status" value="1"/>
</dbReference>
<dbReference type="SUPFAM" id="SSF48557">
    <property type="entry name" value="L-aspartase-like"/>
    <property type="match status" value="1"/>
</dbReference>
<dbReference type="PROSITE" id="PS00488">
    <property type="entry name" value="PAL_HISTIDASE"/>
    <property type="match status" value="1"/>
</dbReference>
<feature type="chain" id="PRO_0000215387" description="Phenylalanine ammonia-lyase">
    <location>
        <begin position="1"/>
        <end position="714"/>
    </location>
</feature>
<feature type="active site" description="Proton donor/acceptor" evidence="3">
    <location>
        <position position="106"/>
    </location>
</feature>
<feature type="binding site" evidence="3">
    <location>
        <position position="258"/>
    </location>
    <ligand>
        <name>(E)-cinnamate</name>
        <dbReference type="ChEBI" id="CHEBI:15669"/>
    </ligand>
</feature>
<feature type="binding site" evidence="3">
    <location>
        <position position="346"/>
    </location>
    <ligand>
        <name>(E)-cinnamate</name>
        <dbReference type="ChEBI" id="CHEBI:15669"/>
    </ligand>
</feature>
<feature type="binding site" evidence="3">
    <location>
        <position position="352"/>
    </location>
    <ligand>
        <name>(E)-cinnamate</name>
        <dbReference type="ChEBI" id="CHEBI:15669"/>
    </ligand>
</feature>
<feature type="binding site" evidence="3">
    <location>
        <position position="382"/>
    </location>
    <ligand>
        <name>(E)-cinnamate</name>
        <dbReference type="ChEBI" id="CHEBI:15669"/>
    </ligand>
</feature>
<feature type="binding site" evidence="1">
    <location>
        <position position="454"/>
    </location>
    <ligand>
        <name>(E)-cinnamate</name>
        <dbReference type="ChEBI" id="CHEBI:15669"/>
    </ligand>
</feature>
<feature type="binding site" evidence="1">
    <location>
        <position position="482"/>
    </location>
    <ligand>
        <name>(E)-cinnamate</name>
        <dbReference type="ChEBI" id="CHEBI:15669"/>
    </ligand>
</feature>
<feature type="binding site" evidence="3">
    <location>
        <position position="485"/>
    </location>
    <ligand>
        <name>(E)-cinnamate</name>
        <dbReference type="ChEBI" id="CHEBI:15669"/>
    </ligand>
</feature>
<feature type="modified residue" description="2,3-didehydroalanine (Ser)" evidence="4">
    <location>
        <position position="201"/>
    </location>
</feature>
<feature type="cross-link" description="5-imidazolinone (Ala-Gly)" evidence="3">
    <location>
        <begin position="200"/>
        <end position="202"/>
    </location>
</feature>
<keyword id="KW-0963">Cytoplasm</keyword>
<keyword id="KW-0456">Lyase</keyword>
<keyword id="KW-0585">Phenylalanine catabolism</keyword>
<keyword id="KW-0587">Phenylpropanoid metabolism</keyword>
<sequence length="714" mass="77752">MDSTTAIGNGVGSGGSPGFCLKDPLNWGVAAEAMKGSHLEEVKGMVEEFRKPVVRLGGETLTISQVAAIAVRGSEVAVELSESAREGVKASSDWVMESMNKGTDSYGVTTGFGATSHRRTKEGGALQKELIRFLNAGIFGNGTESCHTLPQSATRAAMLVRINTLLQGYSGIRFEILEAISKFLNNNITPCLPLRGTITASGDLVPLSYIAGLLTGRHNSKAVGPTGEILHPKEAFRLAGVEGGFFELQPKEGLALVNGTAVGSGLASMVLFEANILAVLSEVLSAIFAEVMQGKPEFTDHLTHKLKHHPGQIEAAAIMEHILDGSSYVKAAQKLHEMDPLQKPKQDRYALRTSPQWLGPLIEVIRSSTKSIEREINSVNDNPLINVSRNKALHGGNFQGTPIGVSMDNTRLAVASIGKLMFAQFSELVNDFYNNGLPSNLSGGRNPSLDYGFKGAEIAMAAYCSELQFLANPVTNHVQSAEQHNQDVNSLGLISSRKTAEAVDILKLMSSTYLVALCQAVDLRHFEENLRNTVKSTVSQVAKRVLTMGVNGELHPSRFCEKDLLRVVDREYIFAYIDDPCSATYPLMQKLRQVLVEHALKNGESEKNLSTSIFQKIRAFEEEIKTLLPKEVESTRAAIENGNSAIPNRIKECRSYPLYKFVREELGTELLTGEKVRSPGEEFDKVFTALCKGEMIDPLMDCLKEWNGAPLPIC</sequence>
<comment type="function">
    <text evidence="2">This is a key enzyme of plant metabolism catalyzing the first reaction in the biosynthesis from L-phenylalanine of a wide variety of natural products based on the phenylpropane skeleton.</text>
</comment>
<comment type="catalytic activity">
    <reaction evidence="2">
        <text>L-phenylalanine = (E)-cinnamate + NH4(+)</text>
        <dbReference type="Rhea" id="RHEA:21384"/>
        <dbReference type="ChEBI" id="CHEBI:15669"/>
        <dbReference type="ChEBI" id="CHEBI:28938"/>
        <dbReference type="ChEBI" id="CHEBI:58095"/>
        <dbReference type="EC" id="4.3.1.24"/>
    </reaction>
</comment>
<comment type="pathway">
    <text evidence="5">Phenylpropanoid metabolism; trans-cinnamate biosynthesis; trans-cinnamate from L-phenylalanine: step 1/1.</text>
</comment>
<comment type="subunit">
    <text evidence="2">Homotetramer.</text>
</comment>
<comment type="subcellular location">
    <subcellularLocation>
        <location evidence="5">Cytoplasm</location>
    </subcellularLocation>
</comment>
<comment type="PTM">
    <text evidence="3">Contains an active site 4-methylidene-imidazol-5-one (MIO), which is formed autocatalytically by cyclization and dehydration of residues Ala-Ser-Gly.</text>
</comment>
<comment type="similarity">
    <text evidence="5">Belongs to the PAL/histidase family.</text>
</comment>
<accession>P45726</accession>
<evidence type="ECO:0000250" key="1">
    <source>
        <dbReference type="UniProtKB" id="P11544"/>
    </source>
</evidence>
<evidence type="ECO:0000250" key="2">
    <source>
        <dbReference type="UniProtKB" id="P24481"/>
    </source>
</evidence>
<evidence type="ECO:0000250" key="3">
    <source>
        <dbReference type="UniProtKB" id="Q68G84"/>
    </source>
</evidence>
<evidence type="ECO:0000255" key="4">
    <source>
        <dbReference type="PROSITE-ProRule" id="PRU10122"/>
    </source>
</evidence>
<evidence type="ECO:0000305" key="5"/>
<proteinExistence type="evidence at transcript level"/>
<reference key="1">
    <citation type="journal article" date="1994" name="Theor. Appl. Genet.">
        <title>Molecular cloning of phenylalanine ammonia-lyase cDNA and classification of varieties and cultivars of tea plants (Camellia sinensis) using the tea PAL cDNA probe.</title>
        <authorList>
            <person name="Matsumoto S."/>
            <person name="Takeuchi A."/>
            <person name="Hayatsu M."/>
            <person name="Kondo S."/>
        </authorList>
        <dbReference type="AGRICOLA" id="IND20445290"/>
    </citation>
    <scope>NUCLEOTIDE SEQUENCE [MRNA]</scope>
    <source>
        <strain>cv. Yabukita</strain>
        <tissue>Leaf</tissue>
    </source>
</reference>
<name>PALY_CAMSI</name>
<organism>
    <name type="scientific">Camellia sinensis</name>
    <name type="common">Tea plant</name>
    <name type="synonym">Thea sinensis</name>
    <dbReference type="NCBI Taxonomy" id="4442"/>
    <lineage>
        <taxon>Eukaryota</taxon>
        <taxon>Viridiplantae</taxon>
        <taxon>Streptophyta</taxon>
        <taxon>Embryophyta</taxon>
        <taxon>Tracheophyta</taxon>
        <taxon>Spermatophyta</taxon>
        <taxon>Magnoliopsida</taxon>
        <taxon>eudicotyledons</taxon>
        <taxon>Gunneridae</taxon>
        <taxon>Pentapetalae</taxon>
        <taxon>asterids</taxon>
        <taxon>Ericales</taxon>
        <taxon>Theaceae</taxon>
        <taxon>Camellia</taxon>
    </lineage>
</organism>
<gene>
    <name type="primary">PAL</name>
</gene>